<feature type="chain" id="PRO_1000196374" description="Small ribosomal subunit protein bS16">
    <location>
        <begin position="1"/>
        <end position="85"/>
    </location>
</feature>
<sequence>MAVKIRLRRMGAKKAPFYRIVVADSRSPRDGRFVEEIGYYNPVTEPTIIKFDEEKAVKWIKNGAQPTDIVKKLFDKAGLKDKLGK</sequence>
<proteinExistence type="inferred from homology"/>
<comment type="similarity">
    <text evidence="1">Belongs to the bacterial ribosomal protein bS16 family.</text>
</comment>
<dbReference type="EMBL" id="AP009049">
    <property type="protein sequence ID" value="BAH06349.1"/>
    <property type="molecule type" value="Genomic_DNA"/>
</dbReference>
<dbReference type="RefSeq" id="WP_012101791.1">
    <property type="nucleotide sequence ID" value="NC_011837.1"/>
</dbReference>
<dbReference type="SMR" id="B9E1H4"/>
<dbReference type="KEGG" id="ckr:CKR_1298"/>
<dbReference type="HOGENOM" id="CLU_100590_5_0_9"/>
<dbReference type="Proteomes" id="UP000007969">
    <property type="component" value="Chromosome"/>
</dbReference>
<dbReference type="GO" id="GO:0005737">
    <property type="term" value="C:cytoplasm"/>
    <property type="evidence" value="ECO:0007669"/>
    <property type="project" value="UniProtKB-ARBA"/>
</dbReference>
<dbReference type="GO" id="GO:0015935">
    <property type="term" value="C:small ribosomal subunit"/>
    <property type="evidence" value="ECO:0007669"/>
    <property type="project" value="TreeGrafter"/>
</dbReference>
<dbReference type="GO" id="GO:0003735">
    <property type="term" value="F:structural constituent of ribosome"/>
    <property type="evidence" value="ECO:0007669"/>
    <property type="project" value="InterPro"/>
</dbReference>
<dbReference type="GO" id="GO:0006412">
    <property type="term" value="P:translation"/>
    <property type="evidence" value="ECO:0007669"/>
    <property type="project" value="UniProtKB-UniRule"/>
</dbReference>
<dbReference type="FunFam" id="3.30.1320.10:FF:000002">
    <property type="entry name" value="30S ribosomal protein S16"/>
    <property type="match status" value="1"/>
</dbReference>
<dbReference type="Gene3D" id="3.30.1320.10">
    <property type="match status" value="1"/>
</dbReference>
<dbReference type="HAMAP" id="MF_00385">
    <property type="entry name" value="Ribosomal_bS16"/>
    <property type="match status" value="1"/>
</dbReference>
<dbReference type="InterPro" id="IPR000307">
    <property type="entry name" value="Ribosomal_bS16"/>
</dbReference>
<dbReference type="InterPro" id="IPR023803">
    <property type="entry name" value="Ribosomal_bS16_dom_sf"/>
</dbReference>
<dbReference type="NCBIfam" id="TIGR00002">
    <property type="entry name" value="S16"/>
    <property type="match status" value="1"/>
</dbReference>
<dbReference type="PANTHER" id="PTHR12919">
    <property type="entry name" value="30S RIBOSOMAL PROTEIN S16"/>
    <property type="match status" value="1"/>
</dbReference>
<dbReference type="PANTHER" id="PTHR12919:SF20">
    <property type="entry name" value="SMALL RIBOSOMAL SUBUNIT PROTEIN BS16M"/>
    <property type="match status" value="1"/>
</dbReference>
<dbReference type="Pfam" id="PF00886">
    <property type="entry name" value="Ribosomal_S16"/>
    <property type="match status" value="1"/>
</dbReference>
<dbReference type="SUPFAM" id="SSF54565">
    <property type="entry name" value="Ribosomal protein S16"/>
    <property type="match status" value="1"/>
</dbReference>
<gene>
    <name evidence="1" type="primary">rpsP</name>
    <name type="ordered locus">CKR_1298</name>
</gene>
<name>RS16_CLOK1</name>
<evidence type="ECO:0000255" key="1">
    <source>
        <dbReference type="HAMAP-Rule" id="MF_00385"/>
    </source>
</evidence>
<evidence type="ECO:0000305" key="2"/>
<reference key="1">
    <citation type="submission" date="2005-09" db="EMBL/GenBank/DDBJ databases">
        <title>Complete genome sequence of Clostridium kluyveri and comparative genomics of Clostridia species.</title>
        <authorList>
            <person name="Inui M."/>
            <person name="Nonaka H."/>
            <person name="Shinoda Y."/>
            <person name="Ikenaga Y."/>
            <person name="Abe M."/>
            <person name="Naito K."/>
            <person name="Vertes A.A."/>
            <person name="Yukawa H."/>
        </authorList>
    </citation>
    <scope>NUCLEOTIDE SEQUENCE [LARGE SCALE GENOMIC DNA]</scope>
    <source>
        <strain>NBRC 12016</strain>
    </source>
</reference>
<organism>
    <name type="scientific">Clostridium kluyveri (strain NBRC 12016)</name>
    <dbReference type="NCBI Taxonomy" id="583346"/>
    <lineage>
        <taxon>Bacteria</taxon>
        <taxon>Bacillati</taxon>
        <taxon>Bacillota</taxon>
        <taxon>Clostridia</taxon>
        <taxon>Eubacteriales</taxon>
        <taxon>Clostridiaceae</taxon>
        <taxon>Clostridium</taxon>
    </lineage>
</organism>
<protein>
    <recommendedName>
        <fullName evidence="1">Small ribosomal subunit protein bS16</fullName>
    </recommendedName>
    <alternativeName>
        <fullName evidence="2">30S ribosomal protein S16</fullName>
    </alternativeName>
</protein>
<keyword id="KW-0687">Ribonucleoprotein</keyword>
<keyword id="KW-0689">Ribosomal protein</keyword>
<accession>B9E1H4</accession>